<dbReference type="EMBL" id="Z48584">
    <property type="protein sequence ID" value="CAA88476.1"/>
    <property type="molecule type" value="Genomic_DNA"/>
</dbReference>
<dbReference type="PIR" id="T27758">
    <property type="entry name" value="T27758"/>
</dbReference>
<dbReference type="RefSeq" id="NP_496105.1">
    <property type="nucleotide sequence ID" value="NM_063704.7"/>
</dbReference>
<dbReference type="SMR" id="Q09369"/>
<dbReference type="FunCoup" id="Q09369">
    <property type="interactions" value="205"/>
</dbReference>
<dbReference type="STRING" id="6239.ZK1321.3.1"/>
<dbReference type="PaxDb" id="6239-ZK1321.3"/>
<dbReference type="PeptideAtlas" id="Q09369"/>
<dbReference type="EnsemblMetazoa" id="ZK1321.3.1">
    <property type="protein sequence ID" value="ZK1321.3.1"/>
    <property type="gene ID" value="WBGene00000178"/>
</dbReference>
<dbReference type="GeneID" id="174537"/>
<dbReference type="KEGG" id="cel:CELE_ZK1321.3"/>
<dbReference type="UCSC" id="ZK1321.3.1">
    <property type="organism name" value="c. elegans"/>
</dbReference>
<dbReference type="AGR" id="WB:WBGene00000178"/>
<dbReference type="CTD" id="174537"/>
<dbReference type="WormBase" id="ZK1321.3">
    <property type="protein sequence ID" value="CE01710"/>
    <property type="gene ID" value="WBGene00000178"/>
    <property type="gene designation" value="aqp-10"/>
</dbReference>
<dbReference type="eggNOG" id="ENOG502S38W">
    <property type="taxonomic scope" value="Eukaryota"/>
</dbReference>
<dbReference type="GeneTree" id="ENSGT00530000063816"/>
<dbReference type="HOGENOM" id="CLU_074449_2_0_1"/>
<dbReference type="InParanoid" id="Q09369"/>
<dbReference type="OMA" id="WFILTYW"/>
<dbReference type="OrthoDB" id="1580043at2759"/>
<dbReference type="PhylomeDB" id="Q09369"/>
<dbReference type="Reactome" id="R-CEL-432047">
    <property type="pathway name" value="Passive transport by Aquaporins"/>
</dbReference>
<dbReference type="PRO" id="PR:Q09369"/>
<dbReference type="Proteomes" id="UP000001940">
    <property type="component" value="Chromosome II"/>
</dbReference>
<dbReference type="Bgee" id="WBGene00000178">
    <property type="expression patterns" value="Expressed in pharyngeal muscle cell (C elegans) and 4 other cell types or tissues"/>
</dbReference>
<dbReference type="GO" id="GO:0005737">
    <property type="term" value="C:cytoplasm"/>
    <property type="evidence" value="ECO:0000318"/>
    <property type="project" value="GO_Central"/>
</dbReference>
<dbReference type="GO" id="GO:0016020">
    <property type="term" value="C:membrane"/>
    <property type="evidence" value="ECO:0007669"/>
    <property type="project" value="UniProtKB-SubCell"/>
</dbReference>
<dbReference type="GO" id="GO:0015267">
    <property type="term" value="F:channel activity"/>
    <property type="evidence" value="ECO:0000318"/>
    <property type="project" value="GO_Central"/>
</dbReference>
<dbReference type="GO" id="GO:0045087">
    <property type="term" value="P:innate immune response"/>
    <property type="evidence" value="ECO:0007007"/>
    <property type="project" value="WormBase"/>
</dbReference>
<dbReference type="FunFam" id="1.20.1080.10:FF:000071">
    <property type="entry name" value="Aquaporin"/>
    <property type="match status" value="1"/>
</dbReference>
<dbReference type="Gene3D" id="1.20.1080.10">
    <property type="entry name" value="Glycerol uptake facilitator protein"/>
    <property type="match status" value="1"/>
</dbReference>
<dbReference type="InterPro" id="IPR051883">
    <property type="entry name" value="AQP11/12_channel"/>
</dbReference>
<dbReference type="InterPro" id="IPR023271">
    <property type="entry name" value="Aquaporin-like"/>
</dbReference>
<dbReference type="InterPro" id="IPR016697">
    <property type="entry name" value="Aquaporin_11/12"/>
</dbReference>
<dbReference type="InterPro" id="IPR031145">
    <property type="entry name" value="Invert_Aqp-10"/>
</dbReference>
<dbReference type="PANTHER" id="PTHR21191">
    <property type="entry name" value="AQUAPORIN"/>
    <property type="match status" value="1"/>
</dbReference>
<dbReference type="PANTHER" id="PTHR21191:SF16">
    <property type="entry name" value="AQUAPORIN"/>
    <property type="match status" value="1"/>
</dbReference>
<dbReference type="PIRSF" id="PIRSF017529">
    <property type="entry name" value="Aquaporin_11/12"/>
    <property type="match status" value="1"/>
</dbReference>
<dbReference type="PRINTS" id="PR02023">
    <property type="entry name" value="AQUAPORIN10I"/>
</dbReference>
<dbReference type="SUPFAM" id="SSF81338">
    <property type="entry name" value="Aquaporin-like"/>
    <property type="match status" value="1"/>
</dbReference>
<feature type="chain" id="PRO_0000065577" description="Putative aquaporin-10">
    <location>
        <begin position="1"/>
        <end position="280"/>
    </location>
</feature>
<feature type="topological domain" description="Cytoplasmic" evidence="1">
    <location>
        <begin position="1"/>
        <end position="8"/>
    </location>
</feature>
<feature type="transmembrane region" description="Helical; Name=1" evidence="1">
    <location>
        <begin position="9"/>
        <end position="29"/>
    </location>
</feature>
<feature type="topological domain" description="Extracellular" evidence="1">
    <location>
        <begin position="30"/>
        <end position="64"/>
    </location>
</feature>
<feature type="transmembrane region" description="Helical; Name=2" evidence="1">
    <location>
        <begin position="65"/>
        <end position="85"/>
    </location>
</feature>
<feature type="topological domain" description="Cytoplasmic" evidence="1">
    <location>
        <begin position="86"/>
        <end position="114"/>
    </location>
</feature>
<feature type="transmembrane region" description="Helical; Name=3" evidence="1">
    <location>
        <begin position="115"/>
        <end position="135"/>
    </location>
</feature>
<feature type="topological domain" description="Extracellular" evidence="1">
    <location>
        <begin position="136"/>
        <end position="164"/>
    </location>
</feature>
<feature type="transmembrane region" description="Helical; Name=4" evidence="1">
    <location>
        <begin position="165"/>
        <end position="185"/>
    </location>
</feature>
<feature type="topological domain" description="Cytoplasmic" evidence="1">
    <location>
        <begin position="186"/>
        <end position="193"/>
    </location>
</feature>
<feature type="transmembrane region" description="Helical; Name=5" evidence="1">
    <location>
        <begin position="194"/>
        <end position="214"/>
    </location>
</feature>
<feature type="topological domain" description="Extracellular" evidence="1">
    <location>
        <begin position="215"/>
        <end position="233"/>
    </location>
</feature>
<feature type="transmembrane region" description="Helical; Name=6" evidence="1">
    <location>
        <begin position="234"/>
        <end position="254"/>
    </location>
</feature>
<feature type="topological domain" description="Cytoplasmic" evidence="1">
    <location>
        <begin position="255"/>
        <end position="280"/>
    </location>
</feature>
<feature type="region of interest" description="Disordered" evidence="2">
    <location>
        <begin position="256"/>
        <end position="280"/>
    </location>
</feature>
<feature type="compositionally biased region" description="Basic and acidic residues" evidence="2">
    <location>
        <begin position="262"/>
        <end position="280"/>
    </location>
</feature>
<accession>Q09369</accession>
<keyword id="KW-0472">Membrane</keyword>
<keyword id="KW-1185">Reference proteome</keyword>
<keyword id="KW-0812">Transmembrane</keyword>
<keyword id="KW-1133">Transmembrane helix</keyword>
<gene>
    <name type="primary">aqp-10</name>
    <name type="ORF">ZK1321.3</name>
</gene>
<protein>
    <recommendedName>
        <fullName>Putative aquaporin-10</fullName>
    </recommendedName>
</protein>
<name>AQP10_CAEEL</name>
<proteinExistence type="inferred from homology"/>
<organism>
    <name type="scientific">Caenorhabditis elegans</name>
    <dbReference type="NCBI Taxonomy" id="6239"/>
    <lineage>
        <taxon>Eukaryota</taxon>
        <taxon>Metazoa</taxon>
        <taxon>Ecdysozoa</taxon>
        <taxon>Nematoda</taxon>
        <taxon>Chromadorea</taxon>
        <taxon>Rhabditida</taxon>
        <taxon>Rhabditina</taxon>
        <taxon>Rhabditomorpha</taxon>
        <taxon>Rhabditoidea</taxon>
        <taxon>Rhabditidae</taxon>
        <taxon>Peloderinae</taxon>
        <taxon>Caenorhabditis</taxon>
    </lineage>
</organism>
<evidence type="ECO:0000255" key="1"/>
<evidence type="ECO:0000256" key="2">
    <source>
        <dbReference type="SAM" id="MobiDB-lite"/>
    </source>
</evidence>
<evidence type="ECO:0000305" key="3"/>
<sequence length="280" mass="30495">MEAVSSEYYFPLYSALGYFALVFGIGEIARIITAKYVSPRGNSQLFLYELIGTIQMCTCVYENGIIFKNYGFPAIFICVALLLTAGNIFNRGAMTNCAPIFEQFVFGNLGSSKFLTILSAQLIGATFASKFAYLIWNITAPYSTAHLENASNLECILHYKQTAGIVIGFEIVGAFVVRIVVAQLLARPALIKLIPFAISAYLSLALYVVGVPGLNPIVATARLYGCRGIDNSSFFILYWFCPVLGWLTGAYVVGQKSPSKKSAKDVKAEKKAKAAAKKSD</sequence>
<comment type="subcellular location">
    <subcellularLocation>
        <location evidence="3">Membrane</location>
        <topology evidence="3">Multi-pass membrane protein</topology>
    </subcellularLocation>
</comment>
<comment type="similarity">
    <text evidence="3">Belongs to the MIP/aquaporin (TC 1.A.8) family.</text>
</comment>
<reference key="1">
    <citation type="journal article" date="1998" name="Science">
        <title>Genome sequence of the nematode C. elegans: a platform for investigating biology.</title>
        <authorList>
            <consortium name="The C. elegans sequencing consortium"/>
        </authorList>
    </citation>
    <scope>NUCLEOTIDE SEQUENCE [LARGE SCALE GENOMIC DNA]</scope>
    <source>
        <strain>Bristol N2</strain>
    </source>
</reference>